<keyword id="KW-0002">3D-structure</keyword>
<keyword id="KW-0963">Cytoplasm</keyword>
<keyword id="KW-0238">DNA-binding</keyword>
<keyword id="KW-1185">Reference proteome</keyword>
<keyword id="KW-0678">Repressor</keyword>
<keyword id="KW-0804">Transcription</keyword>
<keyword id="KW-0805">Transcription regulation</keyword>
<dbReference type="EMBL" id="J01715">
    <property type="protein sequence ID" value="AAA72140.1"/>
    <property type="molecule type" value="Genomic_DNA"/>
</dbReference>
<dbReference type="EMBL" id="L13768">
    <property type="protein sequence ID" value="AAA72134.1"/>
    <property type="molecule type" value="Genomic_DNA"/>
</dbReference>
<dbReference type="EMBL" id="U14003">
    <property type="protein sequence ID" value="AAA97289.1"/>
    <property type="molecule type" value="Genomic_DNA"/>
</dbReference>
<dbReference type="EMBL" id="U00096">
    <property type="protein sequence ID" value="AAC77346.1"/>
    <property type="molecule type" value="Genomic_DNA"/>
</dbReference>
<dbReference type="EMBL" id="AP009048">
    <property type="protein sequence ID" value="BAE78382.1"/>
    <property type="molecule type" value="Genomic_DNA"/>
</dbReference>
<dbReference type="EMBL" id="M69185">
    <property type="status" value="NOT_ANNOTATED_CDS"/>
    <property type="molecule type" value="Genomic_DNA"/>
</dbReference>
<dbReference type="PIR" id="A03568">
    <property type="entry name" value="RPECW"/>
</dbReference>
<dbReference type="RefSeq" id="NP_418810.1">
    <property type="nucleotide sequence ID" value="NC_000913.3"/>
</dbReference>
<dbReference type="RefSeq" id="WP_000068679.1">
    <property type="nucleotide sequence ID" value="NZ_STEB01000033.1"/>
</dbReference>
<dbReference type="PDB" id="1CO0">
    <property type="method" value="NMR"/>
    <property type="chains" value="A/B=2-108"/>
</dbReference>
<dbReference type="PDB" id="1JHG">
    <property type="method" value="X-ray"/>
    <property type="resolution" value="1.30 A"/>
    <property type="chains" value="A=8-108"/>
</dbReference>
<dbReference type="PDB" id="1MI7">
    <property type="method" value="X-ray"/>
    <property type="resolution" value="2.50 A"/>
    <property type="chains" value="R=2-108"/>
</dbReference>
<dbReference type="PDB" id="1RCS">
    <property type="method" value="NMR"/>
    <property type="chains" value="A/B=4-107"/>
</dbReference>
<dbReference type="PDB" id="1TRO">
    <property type="method" value="X-ray"/>
    <property type="resolution" value="1.90 A"/>
    <property type="chains" value="A/C/E/G=1-108"/>
</dbReference>
<dbReference type="PDB" id="1TRR">
    <property type="method" value="X-ray"/>
    <property type="resolution" value="2.40 A"/>
    <property type="chains" value="A/B/D/E/G/H/J/K=2-108"/>
</dbReference>
<dbReference type="PDB" id="1WRP">
    <property type="method" value="X-ray"/>
    <property type="resolution" value="2.20 A"/>
    <property type="chains" value="R=2-108"/>
</dbReference>
<dbReference type="PDB" id="1WRS">
    <property type="method" value="NMR"/>
    <property type="chains" value="R/S=4-108"/>
</dbReference>
<dbReference type="PDB" id="1WRT">
    <property type="method" value="NMR"/>
    <property type="chains" value="R/S=4-108"/>
</dbReference>
<dbReference type="PDB" id="1ZT9">
    <property type="method" value="X-ray"/>
    <property type="resolution" value="2.00 A"/>
    <property type="chains" value="A/B/D/E=2-108"/>
</dbReference>
<dbReference type="PDB" id="2OZ9">
    <property type="method" value="X-ray"/>
    <property type="resolution" value="1.65 A"/>
    <property type="chains" value="R=2-108"/>
</dbReference>
<dbReference type="PDB" id="3SSW">
    <property type="method" value="X-ray"/>
    <property type="resolution" value="1.67 A"/>
    <property type="chains" value="N/R=2-108"/>
</dbReference>
<dbReference type="PDB" id="3SSX">
    <property type="method" value="X-ray"/>
    <property type="resolution" value="1.58 A"/>
    <property type="chains" value="N/R=2-108"/>
</dbReference>
<dbReference type="PDB" id="3WRP">
    <property type="method" value="X-ray"/>
    <property type="resolution" value="1.80 A"/>
    <property type="chains" value="A=1-108"/>
</dbReference>
<dbReference type="PDB" id="5TM0">
    <property type="method" value="NMR"/>
    <property type="chains" value="A/B/C/D=1-108"/>
</dbReference>
<dbReference type="PDB" id="6EJW">
    <property type="method" value="X-ray"/>
    <property type="resolution" value="1.99 A"/>
    <property type="chains" value="A/B/C/D=1-108"/>
</dbReference>
<dbReference type="PDB" id="6EJZ">
    <property type="method" value="X-ray"/>
    <property type="resolution" value="1.90 A"/>
    <property type="chains" value="A/B/C/D=1-108"/>
</dbReference>
<dbReference type="PDB" id="6EKP">
    <property type="method" value="X-ray"/>
    <property type="resolution" value="1.46 A"/>
    <property type="chains" value="A/B=1-108"/>
</dbReference>
<dbReference type="PDB" id="6ELB">
    <property type="method" value="X-ray"/>
    <property type="resolution" value="1.44 A"/>
    <property type="chains" value="A/B=1-108"/>
</dbReference>
<dbReference type="PDB" id="6ELF">
    <property type="method" value="X-ray"/>
    <property type="resolution" value="1.83 A"/>
    <property type="chains" value="A/B=1-108"/>
</dbReference>
<dbReference type="PDB" id="6ELG">
    <property type="method" value="X-ray"/>
    <property type="resolution" value="1.38 A"/>
    <property type="chains" value="A/B=1-108"/>
</dbReference>
<dbReference type="PDB" id="6ENI">
    <property type="method" value="X-ray"/>
    <property type="resolution" value="1.10 A"/>
    <property type="chains" value="A/B=1-108"/>
</dbReference>
<dbReference type="PDB" id="6ENN">
    <property type="method" value="X-ray"/>
    <property type="resolution" value="1.17 A"/>
    <property type="chains" value="A/B=1-108"/>
</dbReference>
<dbReference type="PDB" id="6F7F">
    <property type="method" value="X-ray"/>
    <property type="resolution" value="2.13 A"/>
    <property type="chains" value="A/B/C/D=4-106"/>
</dbReference>
<dbReference type="PDB" id="6F7G">
    <property type="method" value="X-ray"/>
    <property type="resolution" value="1.66 A"/>
    <property type="chains" value="A/C=4-106"/>
</dbReference>
<dbReference type="PDB" id="6F9K">
    <property type="method" value="X-ray"/>
    <property type="resolution" value="1.40 A"/>
    <property type="chains" value="A=1-107"/>
</dbReference>
<dbReference type="PDB" id="6FAL">
    <property type="method" value="X-ray"/>
    <property type="resolution" value="1.20 A"/>
    <property type="chains" value="A/B=2-108"/>
</dbReference>
<dbReference type="PDB" id="6ST6">
    <property type="method" value="X-ray"/>
    <property type="resolution" value="2.05 A"/>
    <property type="chains" value="A=1-105"/>
</dbReference>
<dbReference type="PDB" id="6ST7">
    <property type="method" value="X-ray"/>
    <property type="resolution" value="2.45 A"/>
    <property type="chains" value="A=1-105"/>
</dbReference>
<dbReference type="PDBsum" id="1CO0"/>
<dbReference type="PDBsum" id="1JHG"/>
<dbReference type="PDBsum" id="1MI7"/>
<dbReference type="PDBsum" id="1RCS"/>
<dbReference type="PDBsum" id="1TRO"/>
<dbReference type="PDBsum" id="1TRR"/>
<dbReference type="PDBsum" id="1WRP"/>
<dbReference type="PDBsum" id="1WRS"/>
<dbReference type="PDBsum" id="1WRT"/>
<dbReference type="PDBsum" id="1ZT9"/>
<dbReference type="PDBsum" id="2OZ9"/>
<dbReference type="PDBsum" id="3SSW"/>
<dbReference type="PDBsum" id="3SSX"/>
<dbReference type="PDBsum" id="3WRP"/>
<dbReference type="PDBsum" id="5TM0"/>
<dbReference type="PDBsum" id="6EJW"/>
<dbReference type="PDBsum" id="6EJZ"/>
<dbReference type="PDBsum" id="6EKP"/>
<dbReference type="PDBsum" id="6ELB"/>
<dbReference type="PDBsum" id="6ELF"/>
<dbReference type="PDBsum" id="6ELG"/>
<dbReference type="PDBsum" id="6ENI"/>
<dbReference type="PDBsum" id="6ENN"/>
<dbReference type="PDBsum" id="6F7F"/>
<dbReference type="PDBsum" id="6F7G"/>
<dbReference type="PDBsum" id="6F9K"/>
<dbReference type="PDBsum" id="6FAL"/>
<dbReference type="PDBsum" id="6ST6"/>
<dbReference type="PDBsum" id="6ST7"/>
<dbReference type="SMR" id="P0A881"/>
<dbReference type="BioGRID" id="4260801">
    <property type="interactions" value="81"/>
</dbReference>
<dbReference type="BioGRID" id="853194">
    <property type="interactions" value="1"/>
</dbReference>
<dbReference type="DIP" id="DIP-48204N"/>
<dbReference type="FunCoup" id="P0A881">
    <property type="interactions" value="52"/>
</dbReference>
<dbReference type="IntAct" id="P0A881">
    <property type="interactions" value="3"/>
</dbReference>
<dbReference type="STRING" id="511145.b4393"/>
<dbReference type="BindingDB" id="P0A881"/>
<dbReference type="jPOST" id="P0A881"/>
<dbReference type="PaxDb" id="511145-b4393"/>
<dbReference type="EnsemblBacteria" id="AAC77346">
    <property type="protein sequence ID" value="AAC77346"/>
    <property type="gene ID" value="b4393"/>
</dbReference>
<dbReference type="GeneID" id="93777452"/>
<dbReference type="GeneID" id="948917"/>
<dbReference type="KEGG" id="ecj:JW4356"/>
<dbReference type="KEGG" id="eco:b4393"/>
<dbReference type="KEGG" id="ecoc:C3026_23740"/>
<dbReference type="PATRIC" id="fig|511145.12.peg.4542"/>
<dbReference type="EchoBASE" id="EB1022"/>
<dbReference type="eggNOG" id="COG2973">
    <property type="taxonomic scope" value="Bacteria"/>
</dbReference>
<dbReference type="HOGENOM" id="CLU_147939_0_0_6"/>
<dbReference type="InParanoid" id="P0A881"/>
<dbReference type="OMA" id="MSHEPEY"/>
<dbReference type="OrthoDB" id="5704033at2"/>
<dbReference type="PhylomeDB" id="P0A881"/>
<dbReference type="BioCyc" id="EcoCyc:PD00423"/>
<dbReference type="EvolutionaryTrace" id="P0A881"/>
<dbReference type="PRO" id="PR:P0A881"/>
<dbReference type="Proteomes" id="UP000000625">
    <property type="component" value="Chromosome"/>
</dbReference>
<dbReference type="GO" id="GO:0005737">
    <property type="term" value="C:cytoplasm"/>
    <property type="evidence" value="ECO:0007669"/>
    <property type="project" value="UniProtKB-SubCell"/>
</dbReference>
<dbReference type="GO" id="GO:0003677">
    <property type="term" value="F:DNA binding"/>
    <property type="evidence" value="ECO:0000314"/>
    <property type="project" value="EcoCyc"/>
</dbReference>
<dbReference type="GO" id="GO:0003700">
    <property type="term" value="F:DNA-binding transcription factor activity"/>
    <property type="evidence" value="ECO:0007669"/>
    <property type="project" value="InterPro"/>
</dbReference>
<dbReference type="GO" id="GO:0043565">
    <property type="term" value="F:sequence-specific DNA binding"/>
    <property type="evidence" value="ECO:0000314"/>
    <property type="project" value="EcoCyc"/>
</dbReference>
<dbReference type="GO" id="GO:0045892">
    <property type="term" value="P:negative regulation of DNA-templated transcription"/>
    <property type="evidence" value="ECO:0007669"/>
    <property type="project" value="UniProtKB-UniRule"/>
</dbReference>
<dbReference type="GO" id="GO:0006355">
    <property type="term" value="P:regulation of DNA-templated transcription"/>
    <property type="evidence" value="ECO:0000314"/>
    <property type="project" value="EcoCyc"/>
</dbReference>
<dbReference type="FunFam" id="1.10.1270.10:FF:000001">
    <property type="entry name" value="Trp operon repressor"/>
    <property type="match status" value="1"/>
</dbReference>
<dbReference type="Gene3D" id="1.10.1270.10">
    <property type="entry name" value="TrpR-like"/>
    <property type="match status" value="1"/>
</dbReference>
<dbReference type="HAMAP" id="MF_00475">
    <property type="entry name" value="Trp_repressor"/>
    <property type="match status" value="1"/>
</dbReference>
<dbReference type="InterPro" id="IPR000831">
    <property type="entry name" value="Trp_repress"/>
</dbReference>
<dbReference type="InterPro" id="IPR013335">
    <property type="entry name" value="Trp_repress_bac"/>
</dbReference>
<dbReference type="InterPro" id="IPR010921">
    <property type="entry name" value="Trp_repressor/repl_initiator"/>
</dbReference>
<dbReference type="InterPro" id="IPR038116">
    <property type="entry name" value="TrpR-like_sf"/>
</dbReference>
<dbReference type="NCBIfam" id="TIGR01321">
    <property type="entry name" value="TrpR"/>
    <property type="match status" value="1"/>
</dbReference>
<dbReference type="PANTHER" id="PTHR38025">
    <property type="entry name" value="TRP OPERON REPRESSOR"/>
    <property type="match status" value="1"/>
</dbReference>
<dbReference type="PANTHER" id="PTHR38025:SF1">
    <property type="entry name" value="TRP OPERON REPRESSOR"/>
    <property type="match status" value="1"/>
</dbReference>
<dbReference type="Pfam" id="PF01371">
    <property type="entry name" value="Trp_repressor"/>
    <property type="match status" value="1"/>
</dbReference>
<dbReference type="PIRSF" id="PIRSF003196">
    <property type="entry name" value="Trp_repressor"/>
    <property type="match status" value="1"/>
</dbReference>
<dbReference type="SUPFAM" id="SSF48295">
    <property type="entry name" value="TrpR-like"/>
    <property type="match status" value="1"/>
</dbReference>
<proteinExistence type="evidence at protein level"/>
<name>TRPR_ECOLI</name>
<comment type="function">
    <text>This protein is an aporepressor. When complexed with L-tryptophan it binds the operator region of the trp operon (5'-ACTAGT-'3') and prevents the initiation of transcription. The complex also regulates trp repressor biosynthesis by binding to its regulatory region.</text>
</comment>
<comment type="subunit">
    <text>Homodimer.</text>
</comment>
<comment type="subcellular location">
    <subcellularLocation>
        <location>Cytoplasm</location>
    </subcellularLocation>
</comment>
<comment type="similarity">
    <text evidence="1">Belongs to the TrpR family.</text>
</comment>
<comment type="caution">
    <text evidence="1">PubMed:7841459 sequence was originally thought to originate from S.typhimurium, but seems to come from an unknown E.coli strain.</text>
</comment>
<gene>
    <name type="primary">trpR</name>
    <name type="synonym">rtrY</name>
    <name type="ordered locus">b4393</name>
    <name type="ordered locus">JW4356</name>
</gene>
<feature type="initiator methionine" description="Removed">
    <location>
        <position position="1"/>
    </location>
</feature>
<feature type="chain" id="PRO_0000196494" description="Trp operon repressor">
    <location>
        <begin position="2"/>
        <end position="108"/>
    </location>
</feature>
<feature type="DNA-binding region">
    <location>
        <begin position="68"/>
        <end position="91"/>
    </location>
</feature>
<feature type="sequence conflict" description="In Ref. 4; AAA72134." evidence="1" ref="4">
    <original>L</original>
    <variation>V</variation>
    <location>
        <position position="26"/>
    </location>
</feature>
<feature type="sequence conflict" description="In Ref. 4; AAA72134." evidence="1" ref="4">
    <original>R</original>
    <variation>A</variation>
    <location>
        <position position="56"/>
    </location>
</feature>
<feature type="sequence conflict" description="In Ref. 4; AAA72134." evidence="1" ref="4">
    <original>L</original>
    <variation>M</variation>
    <location>
        <position position="100"/>
    </location>
</feature>
<feature type="helix" evidence="3">
    <location>
        <begin position="2"/>
        <end position="4"/>
    </location>
</feature>
<feature type="helix" evidence="4">
    <location>
        <begin position="6"/>
        <end position="31"/>
    </location>
</feature>
<feature type="helix" evidence="4">
    <location>
        <begin position="35"/>
        <end position="42"/>
    </location>
</feature>
<feature type="helix" evidence="4">
    <location>
        <begin position="45"/>
        <end position="63"/>
    </location>
</feature>
<feature type="helix" evidence="4">
    <location>
        <begin position="68"/>
        <end position="75"/>
    </location>
</feature>
<feature type="helix" evidence="4">
    <location>
        <begin position="79"/>
        <end position="91"/>
    </location>
</feature>
<feature type="helix" evidence="4">
    <location>
        <begin position="94"/>
        <end position="104"/>
    </location>
</feature>
<feature type="turn" evidence="2">
    <location>
        <begin position="105"/>
        <end position="107"/>
    </location>
</feature>
<accession>P0A881</accession>
<accession>P03032</accession>
<accession>Q2M5S4</accession>
<reference key="1">
    <citation type="journal article" date="1980" name="Proc. Natl. Acad. Sci. U.S.A.">
        <title>Nucleotide sequence and expression of Escherichia coli trpR, the structural gene for the trp aporepressor.</title>
        <authorList>
            <person name="Gunsalus R.P."/>
            <person name="Yanofsky C."/>
        </authorList>
    </citation>
    <scope>NUCLEOTIDE SEQUENCE [GENOMIC DNA]</scope>
</reference>
<reference key="2">
    <citation type="journal article" date="1980" name="Nucleic Acids Res.">
        <title>DNA sequence of the E. coli trpR gene and prediction of the amino acid sequence of Trp repressor.</title>
        <authorList>
            <person name="Singleton C.K."/>
            <person name="Roeder W.D."/>
            <person name="Bogosian G."/>
            <person name="Somerville R.L."/>
            <person name="Weith H.L."/>
        </authorList>
    </citation>
    <scope>NUCLEOTIDE SEQUENCE [GENOMIC DNA]</scope>
</reference>
<reference key="3">
    <citation type="submission" date="1992-09" db="EMBL/GenBank/DDBJ databases">
        <authorList>
            <person name="Bogosian G."/>
        </authorList>
    </citation>
    <scope>NUCLEOTIDE SEQUENCE [GENOMIC DNA]</scope>
    <scope>SEQUENCE REVISION</scope>
</reference>
<reference key="4">
    <citation type="journal article" date="1994" name="DNA Seq.">
        <title>Nucleotide sequence of the Salmonella typhimurium trpR gene.</title>
        <authorList>
            <person name="Skrypka I."/>
            <person name="Somerville R.L."/>
        </authorList>
    </citation>
    <scope>NUCLEOTIDE SEQUENCE [GENOMIC DNA]</scope>
</reference>
<reference key="5">
    <citation type="journal article" date="1995" name="Nucleic Acids Res.">
        <title>Analysis of the Escherichia coli genome VI: DNA sequence of the region from 92.8 through 100 minutes.</title>
        <authorList>
            <person name="Burland V.D."/>
            <person name="Plunkett G. III"/>
            <person name="Sofia H.J."/>
            <person name="Daniels D.L."/>
            <person name="Blattner F.R."/>
        </authorList>
    </citation>
    <scope>NUCLEOTIDE SEQUENCE [LARGE SCALE GENOMIC DNA]</scope>
    <source>
        <strain>K12 / MG1655 / ATCC 47076</strain>
    </source>
</reference>
<reference key="6">
    <citation type="journal article" date="1997" name="Science">
        <title>The complete genome sequence of Escherichia coli K-12.</title>
        <authorList>
            <person name="Blattner F.R."/>
            <person name="Plunkett G. III"/>
            <person name="Bloch C.A."/>
            <person name="Perna N.T."/>
            <person name="Burland V."/>
            <person name="Riley M."/>
            <person name="Collado-Vides J."/>
            <person name="Glasner J.D."/>
            <person name="Rode C.K."/>
            <person name="Mayhew G.F."/>
            <person name="Gregor J."/>
            <person name="Davis N.W."/>
            <person name="Kirkpatrick H.A."/>
            <person name="Goeden M.A."/>
            <person name="Rose D.J."/>
            <person name="Mau B."/>
            <person name="Shao Y."/>
        </authorList>
    </citation>
    <scope>NUCLEOTIDE SEQUENCE [LARGE SCALE GENOMIC DNA]</scope>
    <source>
        <strain>K12 / MG1655 / ATCC 47076</strain>
    </source>
</reference>
<reference key="7">
    <citation type="journal article" date="2006" name="Mol. Syst. Biol.">
        <title>Highly accurate genome sequences of Escherichia coli K-12 strains MG1655 and W3110.</title>
        <authorList>
            <person name="Hayashi K."/>
            <person name="Morooka N."/>
            <person name="Yamamoto Y."/>
            <person name="Fujita K."/>
            <person name="Isono K."/>
            <person name="Choi S."/>
            <person name="Ohtsubo E."/>
            <person name="Baba T."/>
            <person name="Wanner B.L."/>
            <person name="Mori H."/>
            <person name="Horiuchi T."/>
        </authorList>
    </citation>
    <scope>NUCLEOTIDE SEQUENCE [LARGE SCALE GENOMIC DNA]</scope>
    <source>
        <strain>K12 / W3110 / ATCC 27325 / DSM 5911</strain>
    </source>
</reference>
<reference key="8">
    <citation type="journal article" date="1991" name="J. Bacteriol.">
        <title>Murein-metabolizing enzymes from Escherichia coli: sequence analysis and controlled overexpression of the slt gene, which encodes the soluble lytic transglycosylase.</title>
        <authorList>
            <person name="Engel H."/>
            <person name="Kazemier B."/>
            <person name="Keck W."/>
        </authorList>
    </citation>
    <scope>NUCLEOTIDE SEQUENCE [GENOMIC DNA] OF 1-24</scope>
    <source>
        <strain>K12 / W3110 / ATCC 27325 / DSM 5911</strain>
    </source>
</reference>
<reference key="9">
    <citation type="journal article" date="1997" name="Electrophoresis">
        <title>Escherichia coli proteome analysis using the gene-protein database.</title>
        <authorList>
            <person name="VanBogelen R.A."/>
            <person name="Abshire K.Z."/>
            <person name="Moldover B."/>
            <person name="Olson E.R."/>
            <person name="Neidhardt F.C."/>
        </authorList>
    </citation>
    <scope>IDENTIFICATION BY 2D-GEL</scope>
</reference>
<reference key="10">
    <citation type="journal article" date="1987" name="Nature">
        <title>The crystal structure of trp aporepressor at 1.8 A shows how binding tryptophan enhances DNA affinity.</title>
        <authorList>
            <person name="Zhang R.-G."/>
            <person name="Joachimiak A."/>
            <person name="Lawson C.L."/>
            <person name="Schevitz R.W."/>
            <person name="Otwinowski Z."/>
            <person name="Sigler P.B."/>
        </authorList>
    </citation>
    <scope>X-RAY CRYSTALLOGRAPHY (1.8 ANGSTROMS)</scope>
</reference>
<reference key="11">
    <citation type="journal article" date="1988" name="Nature">
        <title>The structure of trp pseudorepressor at 1.65A shows why indole propionate acts as a trp 'inducer'.</title>
        <authorList>
            <person name="Lawson C.L."/>
            <person name="Sigler P.B."/>
        </authorList>
    </citation>
    <scope>X-RAY CRYSTALLOGRAPHY (1.65 ANGSTROMS)</scope>
</reference>
<reference key="12">
    <citation type="journal article" date="1990" name="Biochemistry">
        <title>Sequence-specific 1H NMR assignments and secondary structure in solution of Escherichia coli trp repressor.</title>
        <authorList>
            <person name="Arrowsmith C.H."/>
            <person name="Pachter R."/>
            <person name="Altman R.B."/>
            <person name="Iyer S.B."/>
            <person name="Jardetzky O."/>
        </authorList>
    </citation>
    <scope>STRUCTURE BY NMR</scope>
</reference>
<reference key="13">
    <citation type="journal article" date="1991" name="Eur. J. Biochem.">
        <title>The solution structures of Escherichia coli trp repressor and trp aporepressor at an intermediate resolution.</title>
        <authorList>
            <person name="Arrowsmith C.H."/>
            <person name="Pachter R."/>
            <person name="Altman R.B."/>
            <person name="Jardetzky O."/>
        </authorList>
    </citation>
    <scope>STRUCTURE BY NMR</scope>
</reference>
<reference key="14">
    <citation type="journal article" date="1992" name="Eur. J. Biochem.">
        <title>Sequence-specific NMR assignments of the trp repressor from Escherichia coli using three-dimensional 15N/1H heteronuclear techniques.</title>
        <authorList>
            <person name="Borden K.L.B."/>
            <person name="Bauer C.J."/>
            <person name="Frenkiel T.A."/>
            <person name="Beckmann P."/>
            <person name="Lane A.N."/>
        </authorList>
    </citation>
    <scope>STRUCTURE BY NMR</scope>
</reference>
<reference key="15">
    <citation type="journal article" date="1993" name="J. Mol. Biol.">
        <title>Refined solution structures of the Escherichia coli trp holo- and aporepressor.</title>
        <authorList>
            <person name="Zhao D."/>
            <person name="Arrowsmith C.H."/>
            <person name="Jia X."/>
            <person name="Jardetzky O."/>
        </authorList>
    </citation>
    <scope>STRUCTURE BY NMR</scope>
</reference>
<reference key="16">
    <citation type="journal article" date="1994" name="J. Mol. Biol.">
        <title>The solution structures of the trp repressor-operator DNA complex.</title>
        <authorList>
            <person name="Zhang H."/>
            <person name="Zhao D."/>
            <person name="Revington M."/>
            <person name="Lee W."/>
            <person name="Jia X."/>
            <person name="Arrowsmith C.H."/>
            <person name="Jardetzky O."/>
        </authorList>
    </citation>
    <scope>STRUCTURE BY NMR</scope>
</reference>
<reference key="17">
    <citation type="journal article" date="1990" name="Biochim. Biophys. Acta">
        <title>The stereochemistry and biochemistry of the trp repressor-operator complex.</title>
        <authorList>
            <person name="Luisi B.F."/>
            <person name="Sigler P.B."/>
        </authorList>
    </citation>
    <scope>REVIEW</scope>
</reference>
<sequence length="108" mass="12355">MAQQSPYSAAMAEQRHQEWLRFVDLLKNAYQNDLHLPLLNLMLTPDEREALGTRVRIVEELLRGEMSQRELKNELGAGIATITRGSNSLKAAPVELRQWLEEVLLKSD</sequence>
<organism>
    <name type="scientific">Escherichia coli (strain K12)</name>
    <dbReference type="NCBI Taxonomy" id="83333"/>
    <lineage>
        <taxon>Bacteria</taxon>
        <taxon>Pseudomonadati</taxon>
        <taxon>Pseudomonadota</taxon>
        <taxon>Gammaproteobacteria</taxon>
        <taxon>Enterobacterales</taxon>
        <taxon>Enterobacteriaceae</taxon>
        <taxon>Escherichia</taxon>
    </lineage>
</organism>
<evidence type="ECO:0000305" key="1"/>
<evidence type="ECO:0007829" key="2">
    <source>
        <dbReference type="PDB" id="3WRP"/>
    </source>
</evidence>
<evidence type="ECO:0007829" key="3">
    <source>
        <dbReference type="PDB" id="5TM0"/>
    </source>
</evidence>
<evidence type="ECO:0007829" key="4">
    <source>
        <dbReference type="PDB" id="6ENI"/>
    </source>
</evidence>
<protein>
    <recommendedName>
        <fullName>Trp operon repressor</fullName>
    </recommendedName>
</protein>